<protein>
    <recommendedName>
        <fullName>High mobility group protein B1</fullName>
    </recommendedName>
    <alternativeName>
        <fullName>High mobility group protein 1</fullName>
        <shortName>HMG-1</shortName>
    </alternativeName>
</protein>
<accession>Q6YKA4</accession>
<keyword id="KW-0007">Acetylation</keyword>
<keyword id="KW-1064">Adaptive immunity</keyword>
<keyword id="KW-0013">ADP-ribosylation</keyword>
<keyword id="KW-0072">Autophagy</keyword>
<keyword id="KW-1003">Cell membrane</keyword>
<keyword id="KW-0145">Chemotaxis</keyword>
<keyword id="KW-0158">Chromosome</keyword>
<keyword id="KW-0963">Cytoplasm</keyword>
<keyword id="KW-1015">Disulfide bond</keyword>
<keyword id="KW-0227">DNA damage</keyword>
<keyword id="KW-0233">DNA recombination</keyword>
<keyword id="KW-0234">DNA repair</keyword>
<keyword id="KW-0238">DNA-binding</keyword>
<keyword id="KW-0967">Endosome</keyword>
<keyword id="KW-0391">Immunity</keyword>
<keyword id="KW-0395">Inflammatory response</keyword>
<keyword id="KW-0399">Innate immunity</keyword>
<keyword id="KW-1017">Isopeptide bond</keyword>
<keyword id="KW-0472">Membrane</keyword>
<keyword id="KW-0539">Nucleus</keyword>
<keyword id="KW-0558">Oxidation</keyword>
<keyword id="KW-0597">Phosphoprotein</keyword>
<keyword id="KW-1185">Reference proteome</keyword>
<keyword id="KW-0677">Repeat</keyword>
<keyword id="KW-0964">Secreted</keyword>
<evidence type="ECO:0000250" key="1">
    <source>
        <dbReference type="UniProtKB" id="P09429"/>
    </source>
</evidence>
<evidence type="ECO:0000250" key="2">
    <source>
        <dbReference type="UniProtKB" id="P10103"/>
    </source>
</evidence>
<evidence type="ECO:0000250" key="3">
    <source>
        <dbReference type="UniProtKB" id="P63158"/>
    </source>
</evidence>
<evidence type="ECO:0000250" key="4">
    <source>
        <dbReference type="UniProtKB" id="P63159"/>
    </source>
</evidence>
<evidence type="ECO:0000255" key="5">
    <source>
        <dbReference type="PROSITE-ProRule" id="PRU00267"/>
    </source>
</evidence>
<evidence type="ECO:0000256" key="6">
    <source>
        <dbReference type="SAM" id="MobiDB-lite"/>
    </source>
</evidence>
<evidence type="ECO:0000305" key="7"/>
<comment type="function">
    <text evidence="1 2 4">Multifunctional redox sensitive protein with various roles in different cellular compartments. In the nucleus is one of the major chromatin-associated non-histone proteins and acts as a DNA chaperone involved in replication, transcription, chromatin remodeling, V(D)J recombination, DNA repair and genome stability. Proposed to be an universal biosensor for nucleic acids. Promotes host inflammatory response to sterile and infectious signals and is involved in the coordination and integration of innate and adaptive immune responses. In the cytoplasm functions as a sensor and/or chaperone for immunogenic nucleic acids implicating the activation of TLR9-mediated immune responses, and mediates autophagy. Acts as a danger-associated molecular pattern (DAMP) molecule that amplifies immune responses during tissue injury. Released to the extracellular environment can bind DNA, nucleosomes, IL-1 beta, CXCL12, AGER isoform 2/sRAGE, lipopolysaccharide (LPS) and lipoteichoic acid (LTA), and activates cells through engagement of multiple surface receptors. In the extracellular compartment fully reduced HMGB1 (released by necrosis) acts as a chemokine, disulfide HMGB1 (actively secreted) as a cytokine, and sulfonyl HMGB1 (released from apoptotic cells) promotes immunological tolerance. Has proangiogenic activity. May be involved in platelet activation. Binds to phosphatidylserine and phosphatidylethanolamide. Bound to RAGE mediates signaling for neuronal outgrowth. May play a role in accumulation of expanded polyglutamine (polyQ) proteins.</text>
</comment>
<comment type="function">
    <text evidence="1 2 3 4">Nuclear functions are attributed to fully reduced HGMB1. Associates with chromatin and binds DNA with a preference to non-canonical DNA structures such as single-stranded DNA, DNA-containing cruciforms or bent structures, supercoiled DNA and ZDNA. Can bent DNA and enhance DNA flexibility by looping thus providing a mechanism to promote activities on various gene promoters by enhancing transcription factor binding and/or bringing distant regulatory sequences into close proximity. May be involved in nucleotide excision repair (NER), mismatch repair (MMR) and base excision repair (BER) pathways, and double strand break repair such as non-homologous end joining (NHEJ). Involved in V(D)J recombination by acting as a cofactor of the RAG complex: acts by stimulating cleavage and RAG protein binding at the 23 bp spacer of conserved recombination signal sequences (RSS). In vitro can displace histone H1 from highly bent DNA. Can restructure the canonical nucleosome leading to relaxation of structural constraints for transcription factor-binding. Enhances binding of sterol regulatory element-binding proteins (SREBPs) such as SREBF1 to their cognate DNA sequences and increases their transcriptional activities. Facilitates binding of TP53 to DNA. May be involved in mitochondrial quality control and autophagy in a transcription-dependent fashion implicating HSPB1. Can modulate the activity of the telomerase complex and may be involved in telomere maintenance.</text>
</comment>
<comment type="function">
    <text evidence="1 3">In the cytoplasm proposed to dissociate the BECN1:BCL2 complex via competitive interaction with BECN1 leading to autophagy activation. Can protect BECN1 and ATG5 from calpain-mediated cleavage and thus proposed to control their proautophagic and proapoptotic functions and to regulate the extent and severity of inflammation-associated cellular injury. In myeloid cells has a protective role against endotoxemia and bacterial infection by promoting autophagy. Involved in endosomal translocation and activation of TLR9 in response to CpG-DNA in macrophages.</text>
</comment>
<comment type="function">
    <text evidence="1 2 3 4">In the extracellular compartment (following either active secretion or passive release) involved in regulation of the inflammatory response. Fully reduced HGMB1 (which subsequently gets oxidized after release) in association with CXCL12 mediates the recruitment of inflammatory cells during the initial phase of tissue injury; the CXCL12:HMGB1 complex triggers CXCR4 homodimerization. Induces the migration of monocyte-derived immature dendritic cells and seems to regulate adhesive and migratory functions of neutrophils implicating AGER/RAGE and ITGAM. Can bind to various types of DNA and RNA including microbial unmethylated CpG-DNA to enhance the innate immune response to nucleic acids. Proposed to act in promiscuous DNA/RNA sensing which cooperates with subsequent discriminative sensing by specific pattern recognition receptors. Promotes extracellular DNA-induced AIM2 inflammasome activation implicating AGER/RAGE. Disulfide HMGB1 binds to transmembrane receptors, such as AGER/RAGE, TLR2, TLR4 and probably TREM1, thus activating their signal transduction pathways. Mediates the release of cytokines/chemokines such as TNF, IL-1, IL-6, IL-8, CCL2, CCL3, CCL4 and CXCL10. Promotes secretion of interferon-gamma by macrophage-stimulated natural killer (NK) cells in concert with other cytokines like IL-2 or IL-12. TLR4 is proposed to be the primary receptor promoting macrophage activation and signaling through TLR4 seems to implicate LY96/MD-2. In bacterial LPS- or LTA-mediated inflammatory responses binds to the endotoxins and transfers them to CD14 for signaling to the respective TLR4:LY96 and TLR2 complexes. Contributes to tumor proliferation by association with ACER/RAGE. Can bind to IL1-beta and signals through the IL1R1:IL1RAP receptor complex. Binding to class A CpG activates cytokine production in plasmacytoid dendritic cells implicating TLR9, MYD88 and AGER/RAGE and can activate autoreactive B cells. Via HMGB1-containing chromatin immune complexes may also promote B cell responses to endogenous TLR9 ligands through a B-cell receptor (BCR)-dependent and ACER/RAGE-independent mechanism. Inhibits phagocytosis of apoptotic cells by macrophages; the function is dependent on poly-ADP-ribosylation and involves binding to phosphatidylserine on the cell surface of apoptotic cells. In adaptive immunity may be involved in enhancing immunity through activation of effector T-cells and suppression of regulatory T (TReg) cells. In contrast, without implicating effector or regulatory T-cells, required for tumor infiltration and activation of T-cells expressing the lymphotoxin LTA:LTB heterotrimer thus promoting tumor malignant progression. Also reported to limit proliferation of T-cells. Released HMGB1:nucleosome complexes formed during apoptosis can signal through TLR2 to induce cytokine production. Involved in induction of immunological tolerance by apoptotic cells; its pro-inflammatory activities when released by apoptotic cells are neutralized by reactive oxygen species (ROS)-dependent oxidation specifically on Cys-106. During macrophage activation by activated lymphocyte-derived self apoptotic DNA (ALD-DNA) promotes recruitment of ALD-DNA to endosomes.</text>
</comment>
<comment type="subunit">
    <text evidence="1 3 4">Interacts (fully reduced HMGB1) with CXCL12; probably in a 1:2 ratio involving two molecules of CXCL12, each interacting with one HMG box of HMGB1; inhibited by glycyrrhizin. Associates with the TLR4:LY96 receptor complex. Component of the RAG complex composed of core components RAG1 and RAG2, and associated component HMGB1 or HMGB2. Interacts (in cytoplasm upon starvation) with BECN1; inhibits the interaction of BECN1 and BCL2 leading to promotion of autophagy. Interacts with KPNA1; involved in nuclear import. Interacts with SREBF1, TLR2, TLR4, TLR9, PTPRZ1, APEX1, FEN1, POLB, TERT. Interacts with IL1B, AGER, MSH2, XPA, XPC, HNF1A, TP53. Interacts with CD24; the probable CD24:SIGLEC10 complex is proposed to inhibit HGMB1-mediated tissue damage immune response. Interacts with THBD; prevents HGMB1 interaction with ACER/RAGE and inhibits HGMB1 pro-inflammatory activity. Interacts with HAVCR2; impairs HMGB1 binding to B-DNA and likely HMGB1-mediated innate immune response. Interacts with XPO1; mediating nuclear export. Interacts with receptor RAGE/AGER (By similarity).</text>
</comment>
<comment type="subcellular location">
    <subcellularLocation>
        <location evidence="1">Nucleus</location>
    </subcellularLocation>
    <subcellularLocation>
        <location evidence="2 4">Chromosome</location>
    </subcellularLocation>
    <subcellularLocation>
        <location evidence="1">Cytoplasm</location>
    </subcellularLocation>
    <subcellularLocation>
        <location evidence="1 3">Secreted</location>
    </subcellularLocation>
    <subcellularLocation>
        <location evidence="1 3 4">Cell membrane</location>
        <topology evidence="1 3 4">Peripheral membrane protein</topology>
        <orientation evidence="1 3 4">Extracellular side</orientation>
    </subcellularLocation>
    <subcellularLocation>
        <location evidence="3">Endosome</location>
    </subcellularLocation>
    <subcellularLocation>
        <location evidence="3">Endoplasmic reticulum-Golgi intermediate compartment</location>
    </subcellularLocation>
    <text evidence="1 3">In basal state predominantly nuclear. Shuttles between the cytoplasm and the nucleus. Translocates from the nucleus to the cytoplasm upon autophagy stimulation. Release from macrophages in the extracellular milieu requires the activation of NLRC4 or NLRP3 inflammasomes (By similarity). Passively released to the extracellular milieu from necrotic cells by diffusion, involving the fully reduced HGMB1 which subsequently gets oxidized. Also released from apoptotic cells. Active secretion from a variety of immune and non-immune cells such as macrophages, monocytes, neutrophils, dendritic cells, natural killer cells and plasma cells in response to various stimuli such as LPS and cytokines involves a nonconventional secretory process via secretory lysosomes. Found on the surface of activated platelets.</text>
</comment>
<comment type="domain">
    <text evidence="1">HMG box 2 mediates pro-inflammatory cytokine-stimulating activity and binding to TLR4. However, not involved in mediating immunogenic activity in the context of apoptosis-induced immune tolerance.</text>
</comment>
<comment type="domain">
    <text evidence="1 4">The acidic C-terminal domain forms a flexible structure which can reversibly interact intramolecularily with the HMG boxes and modulate binding to DNA and other proteins.</text>
</comment>
<comment type="PTM">
    <text evidence="1">Phosphorylated at serine residues. Phosphorylation in both NLS regions is required for cytoplasmic translocation followed by secretion.</text>
</comment>
<comment type="PTM">
    <text evidence="1 2 4">Acetylated on multiple sites upon stimulation with LPS (By similarity). Acetylation on lysine residues in the nuclear localization signals (NLS 1 and NLS 2) leads to cytoplasmic localization and subsequent secretion. Acetylation on Lys-3 results in preferential binding to DNA ends and impairs DNA bending activity (By similarity).</text>
</comment>
<comment type="PTM">
    <text evidence="1">Reduction/oxidation of cysteine residues Cys-23, Cys-45 and Cys-106 and a possible intramolecular disulfide bond involving Cys-23 and Cys-45 give rise to different redox forms with specific functional activities in various cellular compartments: 1- fully reduced HMGB1 (HMGB1C23hC45hC106h), 2- disulfide HMGB1 (HMGB1C23-C45C106h) and 3- sulfonyl HMGB1 (HMGB1C23soC45soC106so).</text>
</comment>
<comment type="PTM">
    <text evidence="3">Poly-ADP-ribosylated by PARP1 when secreted following stimulation with LPS (By similarity).</text>
</comment>
<comment type="PTM">
    <text evidence="1 2">In vitro cleavage by CASP1 is liberating a HMG box 1-containing peptide which may mediate immunogenic activity; the peptide antagonizes apoptosis-induced immune tolerance. Can be proteolytically cleaved by a thrombin:thrombomodulin complex; reduces binding to heparin and pro-inflammatory activities (By similarity).</text>
</comment>
<comment type="PTM">
    <text evidence="1">Forms covalent cross-links mediated by transglutaminase TGM2, between a glutamine and the epsilon-amino group of a lysine residue, forming homopolymers and heteropolymers.</text>
</comment>
<comment type="similarity">
    <text evidence="7">Belongs to the HMGB family.</text>
</comment>
<sequence>MGKGDPKKPRGKMSSYAFFVQTCREEHKKKHPDASVNFSEFSKKCSERWKTMSAKEKGKFEDMAKADKARYEREMKTYIPPKGETKKKFKDPNAPKRPPSAFFLFCSEYRPKIKGEHPGLSIGDVAKKLGEMWNNTAADDKQPYEKKAAKLKEKYEKDIAAYRAKGKPDAAKKGVVKAEKSKKKKEEEEDEEDEEDEEEEEDEEDEDEEEDDDDE</sequence>
<name>HMGB1_CANLF</name>
<gene>
    <name type="primary">HMGB1</name>
</gene>
<dbReference type="EMBL" id="AY135519">
    <property type="protein sequence ID" value="AAN11296.1"/>
    <property type="molecule type" value="mRNA"/>
</dbReference>
<dbReference type="EMBL" id="AY135521">
    <property type="protein sequence ID" value="AAN11319.1"/>
    <property type="molecule type" value="Genomic_DNA"/>
</dbReference>
<dbReference type="RefSeq" id="NP_001002937.1">
    <property type="nucleotide sequence ID" value="NM_001002937.2"/>
</dbReference>
<dbReference type="RefSeq" id="XP_013962798.1">
    <property type="nucleotide sequence ID" value="XM_014107323.1"/>
</dbReference>
<dbReference type="RefSeq" id="XP_038290434.1">
    <property type="nucleotide sequence ID" value="XM_038434506.1"/>
</dbReference>
<dbReference type="RefSeq" id="XP_038290436.1">
    <property type="nucleotide sequence ID" value="XM_038434508.1"/>
</dbReference>
<dbReference type="SMR" id="Q6YKA4"/>
<dbReference type="BioGRID" id="139333">
    <property type="interactions" value="1"/>
</dbReference>
<dbReference type="FunCoup" id="Q6YKA4">
    <property type="interactions" value="1468"/>
</dbReference>
<dbReference type="STRING" id="9615.ENSCAFP00000041181"/>
<dbReference type="PaxDb" id="9612-ENSCAFP00000009862"/>
<dbReference type="Ensembl" id="ENSCAFT00000010639.5">
    <property type="protein sequence ID" value="ENSCAFP00000009862.3"/>
    <property type="gene ID" value="ENSCAFG00000006597.6"/>
</dbReference>
<dbReference type="Ensembl" id="ENSCAFT00030040789.1">
    <property type="protein sequence ID" value="ENSCAFP00030035595.1"/>
    <property type="gene ID" value="ENSCAFG00030022196.1"/>
</dbReference>
<dbReference type="Ensembl" id="ENSCAFT00040031360.1">
    <property type="protein sequence ID" value="ENSCAFP00040027271.1"/>
    <property type="gene ID" value="ENSCAFG00040016920.1"/>
</dbReference>
<dbReference type="Ensembl" id="ENSCAFT00845038767.1">
    <property type="protein sequence ID" value="ENSCAFP00845030356.1"/>
    <property type="gene ID" value="ENSCAFG00845021967.1"/>
</dbReference>
<dbReference type="GeneID" id="403170"/>
<dbReference type="KEGG" id="cfa:403170"/>
<dbReference type="CTD" id="3146"/>
<dbReference type="VEuPathDB" id="HostDB:ENSCAFG00845021967"/>
<dbReference type="VGNC" id="VGNC:59082">
    <property type="gene designation" value="HMGB1"/>
</dbReference>
<dbReference type="eggNOG" id="KOG0381">
    <property type="taxonomic scope" value="Eukaryota"/>
</dbReference>
<dbReference type="GeneTree" id="ENSGT00950000183120"/>
<dbReference type="HOGENOM" id="CLU_082854_0_0_1"/>
<dbReference type="InParanoid" id="Q6YKA4"/>
<dbReference type="OMA" id="PHSANEV"/>
<dbReference type="OrthoDB" id="1919336at2759"/>
<dbReference type="TreeFam" id="TF105371"/>
<dbReference type="Reactome" id="R-CFA-140342">
    <property type="pathway name" value="Apoptosis induced DNA fragmentation"/>
</dbReference>
<dbReference type="Reactome" id="R-CFA-445989">
    <property type="pathway name" value="TAK1-dependent IKK and NF-kappa-B activation"/>
</dbReference>
<dbReference type="Reactome" id="R-CFA-5620971">
    <property type="pathway name" value="Pyroptosis"/>
</dbReference>
<dbReference type="Reactome" id="R-CFA-5686938">
    <property type="pathway name" value="Regulation of TLR by endogenous ligand"/>
</dbReference>
<dbReference type="Reactome" id="R-CFA-6798695">
    <property type="pathway name" value="Neutrophil degranulation"/>
</dbReference>
<dbReference type="Reactome" id="R-CFA-879415">
    <property type="pathway name" value="Advanced glycosylation endproduct receptor signaling"/>
</dbReference>
<dbReference type="Reactome" id="R-CFA-933542">
    <property type="pathway name" value="TRAF6 mediated NF-kB activation"/>
</dbReference>
<dbReference type="Proteomes" id="UP000002254">
    <property type="component" value="Chromosome 25"/>
</dbReference>
<dbReference type="Proteomes" id="UP000694429">
    <property type="component" value="Chromosome 25"/>
</dbReference>
<dbReference type="Proteomes" id="UP000694542">
    <property type="component" value="Chromosome 25"/>
</dbReference>
<dbReference type="Proteomes" id="UP000805418">
    <property type="component" value="Chromosome 25"/>
</dbReference>
<dbReference type="Bgee" id="ENSCAFG00000006597">
    <property type="expression patterns" value="Expressed in thymus and 46 other cell types or tissues"/>
</dbReference>
<dbReference type="GO" id="GO:0035868">
    <property type="term" value="C:alphav-beta3 integrin-HMGB1 complex"/>
    <property type="evidence" value="ECO:0007669"/>
    <property type="project" value="Ensembl"/>
</dbReference>
<dbReference type="GO" id="GO:0009986">
    <property type="term" value="C:cell surface"/>
    <property type="evidence" value="ECO:0007669"/>
    <property type="project" value="Ensembl"/>
</dbReference>
<dbReference type="GO" id="GO:0000793">
    <property type="term" value="C:condensed chromosome"/>
    <property type="evidence" value="ECO:0007669"/>
    <property type="project" value="Ensembl"/>
</dbReference>
<dbReference type="GO" id="GO:0005769">
    <property type="term" value="C:early endosome"/>
    <property type="evidence" value="ECO:0007669"/>
    <property type="project" value="Ensembl"/>
</dbReference>
<dbReference type="GO" id="GO:0005783">
    <property type="term" value="C:endoplasmic reticulum"/>
    <property type="evidence" value="ECO:0007669"/>
    <property type="project" value="Ensembl"/>
</dbReference>
<dbReference type="GO" id="GO:0005793">
    <property type="term" value="C:endoplasmic reticulum-Golgi intermediate compartment"/>
    <property type="evidence" value="ECO:0007669"/>
    <property type="project" value="UniProtKB-SubCell"/>
</dbReference>
<dbReference type="GO" id="GO:0005615">
    <property type="term" value="C:extracellular space"/>
    <property type="evidence" value="ECO:0007669"/>
    <property type="project" value="Ensembl"/>
</dbReference>
<dbReference type="GO" id="GO:0043005">
    <property type="term" value="C:neuron projection"/>
    <property type="evidence" value="ECO:0007669"/>
    <property type="project" value="Ensembl"/>
</dbReference>
<dbReference type="GO" id="GO:0005634">
    <property type="term" value="C:nucleus"/>
    <property type="evidence" value="ECO:0007669"/>
    <property type="project" value="UniProtKB-SubCell"/>
</dbReference>
<dbReference type="GO" id="GO:0017053">
    <property type="term" value="C:transcription repressor complex"/>
    <property type="evidence" value="ECO:0007669"/>
    <property type="project" value="Ensembl"/>
</dbReference>
<dbReference type="GO" id="GO:0000405">
    <property type="term" value="F:bubble DNA binding"/>
    <property type="evidence" value="ECO:0000250"/>
    <property type="project" value="AgBase"/>
</dbReference>
<dbReference type="GO" id="GO:0019958">
    <property type="term" value="F:C-X-C chemokine binding"/>
    <property type="evidence" value="ECO:0007669"/>
    <property type="project" value="Ensembl"/>
</dbReference>
<dbReference type="GO" id="GO:0010858">
    <property type="term" value="F:calcium-dependent protein kinase regulator activity"/>
    <property type="evidence" value="ECO:0007669"/>
    <property type="project" value="Ensembl"/>
</dbReference>
<dbReference type="GO" id="GO:0005125">
    <property type="term" value="F:cytokine activity"/>
    <property type="evidence" value="ECO:0007669"/>
    <property type="project" value="Ensembl"/>
</dbReference>
<dbReference type="GO" id="GO:0003684">
    <property type="term" value="F:damaged DNA binding"/>
    <property type="evidence" value="ECO:0007669"/>
    <property type="project" value="Ensembl"/>
</dbReference>
<dbReference type="GO" id="GO:0008301">
    <property type="term" value="F:DNA binding, bending"/>
    <property type="evidence" value="ECO:0000250"/>
    <property type="project" value="AgBase"/>
</dbReference>
<dbReference type="GO" id="GO:0070182">
    <property type="term" value="F:DNA polymerase binding"/>
    <property type="evidence" value="ECO:0007669"/>
    <property type="project" value="Ensembl"/>
</dbReference>
<dbReference type="GO" id="GO:0003725">
    <property type="term" value="F:double-stranded RNA binding"/>
    <property type="evidence" value="ECO:0007669"/>
    <property type="project" value="Ensembl"/>
</dbReference>
<dbReference type="GO" id="GO:0000400">
    <property type="term" value="F:four-way junction DNA binding"/>
    <property type="evidence" value="ECO:0000250"/>
    <property type="project" value="AgBase"/>
</dbReference>
<dbReference type="GO" id="GO:0005178">
    <property type="term" value="F:integrin binding"/>
    <property type="evidence" value="ECO:0007669"/>
    <property type="project" value="Ensembl"/>
</dbReference>
<dbReference type="GO" id="GO:0001530">
    <property type="term" value="F:lipopolysaccharide binding"/>
    <property type="evidence" value="ECO:0007669"/>
    <property type="project" value="Ensembl"/>
</dbReference>
<dbReference type="GO" id="GO:0016829">
    <property type="term" value="F:lyase activity"/>
    <property type="evidence" value="ECO:0007669"/>
    <property type="project" value="Ensembl"/>
</dbReference>
<dbReference type="GO" id="GO:0044378">
    <property type="term" value="F:non-sequence-specific DNA binding, bending"/>
    <property type="evidence" value="ECO:0000250"/>
    <property type="project" value="AgBase"/>
</dbReference>
<dbReference type="GO" id="GO:0001786">
    <property type="term" value="F:phosphatidylserine binding"/>
    <property type="evidence" value="ECO:0007669"/>
    <property type="project" value="Ensembl"/>
</dbReference>
<dbReference type="GO" id="GO:0030295">
    <property type="term" value="F:protein kinase activator activity"/>
    <property type="evidence" value="ECO:0007669"/>
    <property type="project" value="Ensembl"/>
</dbReference>
<dbReference type="GO" id="GO:0061629">
    <property type="term" value="F:RNA polymerase II-specific DNA-binding transcription factor binding"/>
    <property type="evidence" value="ECO:0007669"/>
    <property type="project" value="Ensembl"/>
</dbReference>
<dbReference type="GO" id="GO:0003727">
    <property type="term" value="F:single-stranded RNA binding"/>
    <property type="evidence" value="ECO:0007669"/>
    <property type="project" value="Ensembl"/>
</dbReference>
<dbReference type="GO" id="GO:0097100">
    <property type="term" value="F:supercoiled DNA binding"/>
    <property type="evidence" value="ECO:0000250"/>
    <property type="project" value="AgBase"/>
</dbReference>
<dbReference type="GO" id="GO:0000976">
    <property type="term" value="F:transcription cis-regulatory region binding"/>
    <property type="evidence" value="ECO:0007669"/>
    <property type="project" value="Ensembl"/>
</dbReference>
<dbReference type="GO" id="GO:0003713">
    <property type="term" value="F:transcription coactivator activity"/>
    <property type="evidence" value="ECO:0007669"/>
    <property type="project" value="Ensembl"/>
</dbReference>
<dbReference type="GO" id="GO:0003714">
    <property type="term" value="F:transcription corepressor activity"/>
    <property type="evidence" value="ECO:0007669"/>
    <property type="project" value="Ensembl"/>
</dbReference>
<dbReference type="GO" id="GO:0002218">
    <property type="term" value="P:activation of innate immune response"/>
    <property type="evidence" value="ECO:0007669"/>
    <property type="project" value="Ensembl"/>
</dbReference>
<dbReference type="GO" id="GO:0043277">
    <property type="term" value="P:apoptotic cell clearance"/>
    <property type="evidence" value="ECO:0000250"/>
    <property type="project" value="UniProtKB"/>
</dbReference>
<dbReference type="GO" id="GO:0006914">
    <property type="term" value="P:autophagy"/>
    <property type="evidence" value="ECO:0007669"/>
    <property type="project" value="UniProtKB-KW"/>
</dbReference>
<dbReference type="GO" id="GO:0006284">
    <property type="term" value="P:base-excision repair"/>
    <property type="evidence" value="ECO:0007669"/>
    <property type="project" value="Ensembl"/>
</dbReference>
<dbReference type="GO" id="GO:0098761">
    <property type="term" value="P:cellular response to interleukin-7"/>
    <property type="evidence" value="ECO:0007669"/>
    <property type="project" value="Ensembl"/>
</dbReference>
<dbReference type="GO" id="GO:0071222">
    <property type="term" value="P:cellular response to lipopolysaccharide"/>
    <property type="evidence" value="ECO:0007669"/>
    <property type="project" value="Ensembl"/>
</dbReference>
<dbReference type="GO" id="GO:0032392">
    <property type="term" value="P:DNA geometric change"/>
    <property type="evidence" value="ECO:0000250"/>
    <property type="project" value="AgBase"/>
</dbReference>
<dbReference type="GO" id="GO:0006302">
    <property type="term" value="P:double-strand break repair"/>
    <property type="evidence" value="ECO:0000250"/>
    <property type="project" value="UniProtKB"/>
</dbReference>
<dbReference type="GO" id="GO:0035767">
    <property type="term" value="P:endothelial cell chemotaxis"/>
    <property type="evidence" value="ECO:0007669"/>
    <property type="project" value="Ensembl"/>
</dbReference>
<dbReference type="GO" id="GO:0001935">
    <property type="term" value="P:endothelial cell proliferation"/>
    <property type="evidence" value="ECO:0007669"/>
    <property type="project" value="Ensembl"/>
</dbReference>
<dbReference type="GO" id="GO:0001654">
    <property type="term" value="P:eye development"/>
    <property type="evidence" value="ECO:0007669"/>
    <property type="project" value="Ensembl"/>
</dbReference>
<dbReference type="GO" id="GO:0005980">
    <property type="term" value="P:glycogen catabolic process"/>
    <property type="evidence" value="ECO:0007669"/>
    <property type="project" value="Ensembl"/>
</dbReference>
<dbReference type="GO" id="GO:0031507">
    <property type="term" value="P:heterochromatin formation"/>
    <property type="evidence" value="ECO:0007669"/>
    <property type="project" value="Ensembl"/>
</dbReference>
<dbReference type="GO" id="GO:0002437">
    <property type="term" value="P:inflammatory response to antigenic stimulus"/>
    <property type="evidence" value="ECO:0007669"/>
    <property type="project" value="Ensembl"/>
</dbReference>
<dbReference type="GO" id="GO:0045087">
    <property type="term" value="P:innate immune response"/>
    <property type="evidence" value="ECO:0007669"/>
    <property type="project" value="UniProtKB-KW"/>
</dbReference>
<dbReference type="GO" id="GO:0030324">
    <property type="term" value="P:lung development"/>
    <property type="evidence" value="ECO:0007669"/>
    <property type="project" value="Ensembl"/>
</dbReference>
<dbReference type="GO" id="GO:0002281">
    <property type="term" value="P:macrophage activation involved in immune response"/>
    <property type="evidence" value="ECO:0007669"/>
    <property type="project" value="Ensembl"/>
</dbReference>
<dbReference type="GO" id="GO:0030099">
    <property type="term" value="P:myeloid cell differentiation"/>
    <property type="evidence" value="ECO:0007669"/>
    <property type="project" value="Ensembl"/>
</dbReference>
<dbReference type="GO" id="GO:0001773">
    <property type="term" value="P:myeloid dendritic cell activation"/>
    <property type="evidence" value="ECO:0007669"/>
    <property type="project" value="Ensembl"/>
</dbReference>
<dbReference type="GO" id="GO:0002318">
    <property type="term" value="P:myeloid progenitor cell differentiation"/>
    <property type="evidence" value="ECO:0007669"/>
    <property type="project" value="Ensembl"/>
</dbReference>
<dbReference type="GO" id="GO:2000426">
    <property type="term" value="P:negative regulation of apoptotic cell clearance"/>
    <property type="evidence" value="ECO:0007669"/>
    <property type="project" value="Ensembl"/>
</dbReference>
<dbReference type="GO" id="GO:0043537">
    <property type="term" value="P:negative regulation of blood vessel endothelial cell migration"/>
    <property type="evidence" value="ECO:0007669"/>
    <property type="project" value="Ensembl"/>
</dbReference>
<dbReference type="GO" id="GO:0043371">
    <property type="term" value="P:negative regulation of CD4-positive, alpha-beta T cell differentiation"/>
    <property type="evidence" value="ECO:0007669"/>
    <property type="project" value="Ensembl"/>
</dbReference>
<dbReference type="GO" id="GO:0017055">
    <property type="term" value="P:negative regulation of RNA polymerase II transcription preinitiation complex assembly"/>
    <property type="evidence" value="ECO:0007669"/>
    <property type="project" value="Ensembl"/>
</dbReference>
<dbReference type="GO" id="GO:0032689">
    <property type="term" value="P:negative regulation of type II interferon production"/>
    <property type="evidence" value="ECO:0007669"/>
    <property type="project" value="Ensembl"/>
</dbReference>
<dbReference type="GO" id="GO:0097350">
    <property type="term" value="P:neutrophil clearance"/>
    <property type="evidence" value="ECO:0000250"/>
    <property type="project" value="UniProtKB"/>
</dbReference>
<dbReference type="GO" id="GO:0002270">
    <property type="term" value="P:plasmacytoid dendritic cell activation"/>
    <property type="evidence" value="ECO:0007669"/>
    <property type="project" value="Ensembl"/>
</dbReference>
<dbReference type="GO" id="GO:0042104">
    <property type="term" value="P:positive regulation of activated T cell proliferation"/>
    <property type="evidence" value="ECO:0007669"/>
    <property type="project" value="Ensembl"/>
</dbReference>
<dbReference type="GO" id="GO:0043065">
    <property type="term" value="P:positive regulation of apoptotic process"/>
    <property type="evidence" value="ECO:0007669"/>
    <property type="project" value="Ensembl"/>
</dbReference>
<dbReference type="GO" id="GO:0010508">
    <property type="term" value="P:positive regulation of autophagy"/>
    <property type="evidence" value="ECO:0007669"/>
    <property type="project" value="Ensembl"/>
</dbReference>
<dbReference type="GO" id="GO:0043536">
    <property type="term" value="P:positive regulation of blood vessel endothelial cell migration"/>
    <property type="evidence" value="ECO:0007669"/>
    <property type="project" value="Ensembl"/>
</dbReference>
<dbReference type="GO" id="GO:2000343">
    <property type="term" value="P:positive regulation of chemokine (C-X-C motif) ligand 2 production"/>
    <property type="evidence" value="ECO:0007669"/>
    <property type="project" value="Ensembl"/>
</dbReference>
<dbReference type="GO" id="GO:0007204">
    <property type="term" value="P:positive regulation of cytosolic calcium ion concentration"/>
    <property type="evidence" value="ECO:0007669"/>
    <property type="project" value="Ensembl"/>
</dbReference>
<dbReference type="GO" id="GO:2001200">
    <property type="term" value="P:positive regulation of dendritic cell differentiation"/>
    <property type="evidence" value="ECO:0007669"/>
    <property type="project" value="Ensembl"/>
</dbReference>
<dbReference type="GO" id="GO:0070374">
    <property type="term" value="P:positive regulation of ERK1 and ERK2 cascade"/>
    <property type="evidence" value="ECO:0007669"/>
    <property type="project" value="Ensembl"/>
</dbReference>
<dbReference type="GO" id="GO:0045819">
    <property type="term" value="P:positive regulation of glycogen catabolic process"/>
    <property type="evidence" value="ECO:0007669"/>
    <property type="project" value="Ensembl"/>
</dbReference>
<dbReference type="GO" id="GO:0032727">
    <property type="term" value="P:positive regulation of interferon-alpha production"/>
    <property type="evidence" value="ECO:0007669"/>
    <property type="project" value="Ensembl"/>
</dbReference>
<dbReference type="GO" id="GO:0032728">
    <property type="term" value="P:positive regulation of interferon-beta production"/>
    <property type="evidence" value="ECO:0007669"/>
    <property type="project" value="Ensembl"/>
</dbReference>
<dbReference type="GO" id="GO:0032731">
    <property type="term" value="P:positive regulation of interleukin-1 beta production"/>
    <property type="evidence" value="ECO:0007669"/>
    <property type="project" value="Ensembl"/>
</dbReference>
<dbReference type="GO" id="GO:0032733">
    <property type="term" value="P:positive regulation of interleukin-10 production"/>
    <property type="evidence" value="ECO:0007669"/>
    <property type="project" value="Ensembl"/>
</dbReference>
<dbReference type="GO" id="GO:0032735">
    <property type="term" value="P:positive regulation of interleukin-12 production"/>
    <property type="evidence" value="ECO:0007669"/>
    <property type="project" value="Ensembl"/>
</dbReference>
<dbReference type="GO" id="GO:0032755">
    <property type="term" value="P:positive regulation of interleukin-6 production"/>
    <property type="evidence" value="ECO:0007669"/>
    <property type="project" value="Ensembl"/>
</dbReference>
<dbReference type="GO" id="GO:0032757">
    <property type="term" value="P:positive regulation of interleukin-8 production"/>
    <property type="evidence" value="ECO:0007669"/>
    <property type="project" value="Ensembl"/>
</dbReference>
<dbReference type="GO" id="GO:0046330">
    <property type="term" value="P:positive regulation of JNK cascade"/>
    <property type="evidence" value="ECO:0007669"/>
    <property type="project" value="Ensembl"/>
</dbReference>
<dbReference type="GO" id="GO:0032425">
    <property type="term" value="P:positive regulation of mismatch repair"/>
    <property type="evidence" value="ECO:0007669"/>
    <property type="project" value="Ensembl"/>
</dbReference>
<dbReference type="GO" id="GO:0071639">
    <property type="term" value="P:positive regulation of monocyte chemotactic protein-1 production"/>
    <property type="evidence" value="ECO:0007669"/>
    <property type="project" value="Ensembl"/>
</dbReference>
<dbReference type="GO" id="GO:0090026">
    <property type="term" value="P:positive regulation of monocyte chemotaxis"/>
    <property type="evidence" value="ECO:0007669"/>
    <property type="project" value="Ensembl"/>
</dbReference>
<dbReference type="GO" id="GO:0045639">
    <property type="term" value="P:positive regulation of myeloid cell differentiation"/>
    <property type="evidence" value="ECO:0007669"/>
    <property type="project" value="Ensembl"/>
</dbReference>
<dbReference type="GO" id="GO:1905455">
    <property type="term" value="P:positive regulation of myeloid progenitor cell differentiation"/>
    <property type="evidence" value="ECO:0007669"/>
    <property type="project" value="Ensembl"/>
</dbReference>
<dbReference type="GO" id="GO:1901224">
    <property type="term" value="P:positive regulation of non-canonical NF-kappaB signal transduction"/>
    <property type="evidence" value="ECO:0007669"/>
    <property type="project" value="Ensembl"/>
</dbReference>
<dbReference type="GO" id="GO:1903672">
    <property type="term" value="P:positive regulation of sprouting angiogenesis"/>
    <property type="evidence" value="ECO:0007669"/>
    <property type="project" value="Ensembl"/>
</dbReference>
<dbReference type="GO" id="GO:0034137">
    <property type="term" value="P:positive regulation of toll-like receptor 2 signaling pathway"/>
    <property type="evidence" value="ECO:0007669"/>
    <property type="project" value="Ensembl"/>
</dbReference>
<dbReference type="GO" id="GO:0034145">
    <property type="term" value="P:positive regulation of toll-like receptor 4 signaling pathway"/>
    <property type="evidence" value="ECO:0007669"/>
    <property type="project" value="Ensembl"/>
</dbReference>
<dbReference type="GO" id="GO:0034165">
    <property type="term" value="P:positive regulation of toll-like receptor 9 signaling pathway"/>
    <property type="evidence" value="ECO:0000250"/>
    <property type="project" value="UniProtKB"/>
</dbReference>
<dbReference type="GO" id="GO:0045944">
    <property type="term" value="P:positive regulation of transcription by RNA polymerase II"/>
    <property type="evidence" value="ECO:0007669"/>
    <property type="project" value="Ensembl"/>
</dbReference>
<dbReference type="GO" id="GO:0032760">
    <property type="term" value="P:positive regulation of tumor necrosis factor production"/>
    <property type="evidence" value="ECO:0007669"/>
    <property type="project" value="Ensembl"/>
</dbReference>
<dbReference type="GO" id="GO:1905564">
    <property type="term" value="P:positive regulation of vascular endothelial cell proliferation"/>
    <property type="evidence" value="ECO:0007669"/>
    <property type="project" value="Ensembl"/>
</dbReference>
<dbReference type="GO" id="GO:0046598">
    <property type="term" value="P:positive regulation of viral entry into host cell"/>
    <property type="evidence" value="ECO:0007669"/>
    <property type="project" value="Ensembl"/>
</dbReference>
<dbReference type="GO" id="GO:0090303">
    <property type="term" value="P:positive regulation of wound healing"/>
    <property type="evidence" value="ECO:0007669"/>
    <property type="project" value="Ensembl"/>
</dbReference>
<dbReference type="GO" id="GO:2000819">
    <property type="term" value="P:regulation of nucleotide-excision repair"/>
    <property type="evidence" value="ECO:0007669"/>
    <property type="project" value="Ensembl"/>
</dbReference>
<dbReference type="GO" id="GO:0002840">
    <property type="term" value="P:regulation of T cell mediated immune response to tumor cell"/>
    <property type="evidence" value="ECO:0000250"/>
    <property type="project" value="UniProtKB"/>
</dbReference>
<dbReference type="GO" id="GO:0002643">
    <property type="term" value="P:regulation of tolerance induction"/>
    <property type="evidence" value="ECO:0007669"/>
    <property type="project" value="Ensembl"/>
</dbReference>
<dbReference type="GO" id="GO:0006357">
    <property type="term" value="P:regulation of transcription by RNA polymerase II"/>
    <property type="evidence" value="ECO:0000318"/>
    <property type="project" value="GO_Central"/>
</dbReference>
<dbReference type="GO" id="GO:0051384">
    <property type="term" value="P:response to glucocorticoid"/>
    <property type="evidence" value="ECO:0007669"/>
    <property type="project" value="Ensembl"/>
</dbReference>
<dbReference type="GO" id="GO:0035711">
    <property type="term" value="P:T-helper 1 cell activation"/>
    <property type="evidence" value="ECO:0007669"/>
    <property type="project" value="Ensembl"/>
</dbReference>
<dbReference type="GO" id="GO:0045063">
    <property type="term" value="P:T-helper 1 cell differentiation"/>
    <property type="evidence" value="ECO:0007669"/>
    <property type="project" value="Ensembl"/>
</dbReference>
<dbReference type="GO" id="GO:0006366">
    <property type="term" value="P:transcription by RNA polymerase II"/>
    <property type="evidence" value="ECO:0007669"/>
    <property type="project" value="Ensembl"/>
</dbReference>
<dbReference type="GO" id="GO:0033151">
    <property type="term" value="P:V(D)J recombination"/>
    <property type="evidence" value="ECO:0007669"/>
    <property type="project" value="Ensembl"/>
</dbReference>
<dbReference type="CDD" id="cd21978">
    <property type="entry name" value="HMG-box_HMGB_rpt1"/>
    <property type="match status" value="1"/>
</dbReference>
<dbReference type="CDD" id="cd21979">
    <property type="entry name" value="HMG-box_HMGB_rpt2"/>
    <property type="match status" value="1"/>
</dbReference>
<dbReference type="FunFam" id="1.10.30.10:FF:000006">
    <property type="entry name" value="High mobility group protein B1"/>
    <property type="match status" value="1"/>
</dbReference>
<dbReference type="FunFam" id="1.10.30.10:FF:000015">
    <property type="entry name" value="high mobility group protein B1"/>
    <property type="match status" value="1"/>
</dbReference>
<dbReference type="Gene3D" id="1.10.30.10">
    <property type="entry name" value="High mobility group box domain"/>
    <property type="match status" value="2"/>
</dbReference>
<dbReference type="InterPro" id="IPR009071">
    <property type="entry name" value="HMG_box_dom"/>
</dbReference>
<dbReference type="InterPro" id="IPR036910">
    <property type="entry name" value="HMG_box_dom_sf"/>
</dbReference>
<dbReference type="InterPro" id="IPR017967">
    <property type="entry name" value="HMG_boxA_CS"/>
</dbReference>
<dbReference type="InterPro" id="IPR050342">
    <property type="entry name" value="HMGB"/>
</dbReference>
<dbReference type="PANTHER" id="PTHR48112:SF35">
    <property type="entry name" value="HIGH MOBILITY GROUP PROTEIN B1"/>
    <property type="match status" value="1"/>
</dbReference>
<dbReference type="PANTHER" id="PTHR48112">
    <property type="entry name" value="HIGH MOBILITY GROUP PROTEIN DSP1"/>
    <property type="match status" value="1"/>
</dbReference>
<dbReference type="Pfam" id="PF00505">
    <property type="entry name" value="HMG_box"/>
    <property type="match status" value="1"/>
</dbReference>
<dbReference type="Pfam" id="PF09011">
    <property type="entry name" value="HMG_box_2"/>
    <property type="match status" value="1"/>
</dbReference>
<dbReference type="PRINTS" id="PR00886">
    <property type="entry name" value="HIGHMOBLTY12"/>
</dbReference>
<dbReference type="SMART" id="SM00398">
    <property type="entry name" value="HMG"/>
    <property type="match status" value="2"/>
</dbReference>
<dbReference type="SUPFAM" id="SSF47095">
    <property type="entry name" value="HMG-box"/>
    <property type="match status" value="2"/>
</dbReference>
<dbReference type="PROSITE" id="PS00353">
    <property type="entry name" value="HMG_BOX_1"/>
    <property type="match status" value="1"/>
</dbReference>
<dbReference type="PROSITE" id="PS50118">
    <property type="entry name" value="HMG_BOX_2"/>
    <property type="match status" value="2"/>
</dbReference>
<proteinExistence type="evidence at transcript level"/>
<reference key="1">
    <citation type="journal article" date="2003" name="Cytogenet. Genome Res.">
        <title>Molecular characterization of the canine HMGB1.</title>
        <authorList>
            <person name="Murua Escobar H."/>
            <person name="Meyer B."/>
            <person name="Richter A."/>
            <person name="Becker K."/>
            <person name="Flohr A.M."/>
            <person name="Bullerdiek J."/>
            <person name="Nolte I."/>
        </authorList>
    </citation>
    <scope>NUCLEOTIDE SEQUENCE [GENOMIC DNA / MRNA]</scope>
</reference>
<organism>
    <name type="scientific">Canis lupus familiaris</name>
    <name type="common">Dog</name>
    <name type="synonym">Canis familiaris</name>
    <dbReference type="NCBI Taxonomy" id="9615"/>
    <lineage>
        <taxon>Eukaryota</taxon>
        <taxon>Metazoa</taxon>
        <taxon>Chordata</taxon>
        <taxon>Craniata</taxon>
        <taxon>Vertebrata</taxon>
        <taxon>Euteleostomi</taxon>
        <taxon>Mammalia</taxon>
        <taxon>Eutheria</taxon>
        <taxon>Laurasiatheria</taxon>
        <taxon>Carnivora</taxon>
        <taxon>Caniformia</taxon>
        <taxon>Canidae</taxon>
        <taxon>Canis</taxon>
    </lineage>
</organism>
<feature type="chain" id="PRO_0000048524" description="High mobility group protein B1">
    <location>
        <begin position="1"/>
        <end position="215"/>
    </location>
</feature>
<feature type="DNA-binding region" description="HMG box 1" evidence="5">
    <location>
        <begin position="9"/>
        <end position="79"/>
    </location>
</feature>
<feature type="DNA-binding region" description="HMG box 2" evidence="5">
    <location>
        <begin position="95"/>
        <end position="163"/>
    </location>
</feature>
<feature type="region of interest" description="Sufficient for interaction with HAVCR2" evidence="3">
    <location>
        <begin position="1"/>
        <end position="97"/>
    </location>
</feature>
<feature type="region of interest" description="LPS binding (delipidated)" evidence="1">
    <location>
        <begin position="3"/>
        <end position="15"/>
    </location>
</feature>
<feature type="region of interest" description="NLS 1" evidence="4">
    <location>
        <begin position="27"/>
        <end position="43"/>
    </location>
</feature>
<feature type="region of interest" description="Disordered" evidence="6">
    <location>
        <begin position="76"/>
        <end position="95"/>
    </location>
</feature>
<feature type="region of interest" description="LPS binding (Lipid A)" evidence="1">
    <location>
        <begin position="80"/>
        <end position="96"/>
    </location>
</feature>
<feature type="region of interest" description="Cytokine-stimulating activity" evidence="1">
    <location>
        <begin position="89"/>
        <end position="108"/>
    </location>
</feature>
<feature type="region of interest" description="Binding to AGER/RAGE" evidence="4">
    <location>
        <begin position="150"/>
        <end position="183"/>
    </location>
</feature>
<feature type="region of interest" description="Disordered" evidence="6">
    <location>
        <begin position="161"/>
        <end position="215"/>
    </location>
</feature>
<feature type="region of interest" description="NLS 2" evidence="4">
    <location>
        <begin position="178"/>
        <end position="184"/>
    </location>
</feature>
<feature type="short sequence motif" description="Nuclear localization signal (NLS) 1" evidence="4">
    <location>
        <begin position="27"/>
        <end position="43"/>
    </location>
</feature>
<feature type="short sequence motif" description="Nuclear localization signal (NLS) 2" evidence="4">
    <location>
        <begin position="178"/>
        <end position="184"/>
    </location>
</feature>
<feature type="compositionally biased region" description="Basic and acidic residues" evidence="6">
    <location>
        <begin position="83"/>
        <end position="94"/>
    </location>
</feature>
<feature type="compositionally biased region" description="Basic and acidic residues" evidence="6">
    <location>
        <begin position="161"/>
        <end position="179"/>
    </location>
</feature>
<feature type="compositionally biased region" description="Acidic residues" evidence="6">
    <location>
        <begin position="187"/>
        <end position="215"/>
    </location>
</feature>
<feature type="binding site" evidence="2">
    <location>
        <begin position="1"/>
        <end position="10"/>
    </location>
    <ligand>
        <name>heparin</name>
        <dbReference type="ChEBI" id="CHEBI:28304"/>
    </ligand>
</feature>
<feature type="site" description="Cleavage; by thrombin:thrombomodulin" evidence="2">
    <location>
        <begin position="10"/>
        <end position="11"/>
    </location>
</feature>
<feature type="site" description="Cleavage; by CASP1" evidence="1">
    <location>
        <begin position="67"/>
        <end position="68"/>
    </location>
</feature>
<feature type="modified residue" description="N6-acetyllysine" evidence="2">
    <location>
        <position position="3"/>
    </location>
</feature>
<feature type="modified residue" description="N6-acetyllysine" evidence="2">
    <location>
        <position position="7"/>
    </location>
</feature>
<feature type="modified residue" description="N6-acetyllysine" evidence="2">
    <location>
        <position position="8"/>
    </location>
</feature>
<feature type="modified residue" description="N6-acetyllysine" evidence="2">
    <location>
        <position position="12"/>
    </location>
</feature>
<feature type="modified residue" description="Cysteine sulfonic acid (-SO3H); alternate" evidence="4">
    <location>
        <position position="23"/>
    </location>
</feature>
<feature type="modified residue" description="N6-acetyllysine" evidence="2">
    <location>
        <position position="28"/>
    </location>
</feature>
<feature type="modified residue" description="N6-acetyllysine" evidence="2">
    <location>
        <position position="29"/>
    </location>
</feature>
<feature type="modified residue" description="N6-acetyllysine" evidence="2">
    <location>
        <position position="30"/>
    </location>
</feature>
<feature type="modified residue" description="Phosphoserine" evidence="1">
    <location>
        <position position="35"/>
    </location>
</feature>
<feature type="modified residue" description="N6-acetyllysine" evidence="3">
    <location>
        <position position="43"/>
    </location>
</feature>
<feature type="modified residue" description="Cysteine sulfonic acid (-SO3H); alternate" evidence="4">
    <location>
        <position position="45"/>
    </location>
</feature>
<feature type="modified residue" description="N6-acetyllysine" evidence="3">
    <location>
        <position position="90"/>
    </location>
</feature>
<feature type="modified residue" description="Phosphoserine" evidence="1">
    <location>
        <position position="100"/>
    </location>
</feature>
<feature type="modified residue" description="Cysteine sulfonic acid (-SO3H)" evidence="4">
    <location>
        <position position="106"/>
    </location>
</feature>
<feature type="modified residue" description="N6-acetyllysine" evidence="2">
    <location>
        <position position="127"/>
    </location>
</feature>
<feature type="modified residue" description="N6-acetyllysine" evidence="2">
    <location>
        <position position="128"/>
    </location>
</feature>
<feature type="modified residue" description="N6-acetyllysine" evidence="3">
    <location>
        <position position="141"/>
    </location>
</feature>
<feature type="modified residue" description="N6-acetyllysine" evidence="2">
    <location>
        <position position="172"/>
    </location>
</feature>
<feature type="modified residue" description="N6-acetyllysine" evidence="2">
    <location>
        <position position="173"/>
    </location>
</feature>
<feature type="modified residue" description="N6-acetyllysine" evidence="2">
    <location>
        <position position="177"/>
    </location>
</feature>
<feature type="modified residue" description="N6-acetyllysine" evidence="2">
    <location>
        <position position="180"/>
    </location>
</feature>
<feature type="modified residue" description="ADP-ribosylserine" evidence="1">
    <location>
        <position position="181"/>
    </location>
</feature>
<feature type="modified residue" description="N6-acetyllysine" evidence="2">
    <location>
        <position position="182"/>
    </location>
</feature>
<feature type="modified residue" description="N6-acetyllysine" evidence="2">
    <location>
        <position position="183"/>
    </location>
</feature>
<feature type="modified residue" description="N6-acetyllysine" evidence="2">
    <location>
        <position position="184"/>
    </location>
</feature>
<feature type="modified residue" description="N6-acetyllysine" evidence="2">
    <location>
        <position position="185"/>
    </location>
</feature>
<feature type="disulfide bond" description="In disulfide HMGB1; alternate" evidence="4">
    <location>
        <begin position="23"/>
        <end position="45"/>
    </location>
</feature>
<feature type="cross-link" description="Isoglutamyl lysine isopeptide (Lys-Gln) (interchain with Q-?)" evidence="1">
    <location>
        <position position="28"/>
    </location>
</feature>
<feature type="cross-link" description="Isoglutamyl lysine isopeptide (Lys-Gln) (interchain with Q-?)" evidence="1">
    <location>
        <position position="43"/>
    </location>
</feature>
<feature type="cross-link" description="Isoglutamyl lysine isopeptide (Lys-Gln) (interchain with Q-?)" evidence="1">
    <location>
        <position position="44"/>
    </location>
</feature>
<feature type="cross-link" description="Isoglutamyl lysine isopeptide (Lys-Gln) (interchain with Q-?)" evidence="1">
    <location>
        <position position="68"/>
    </location>
</feature>
<feature type="cross-link" description="Isoglutamyl lysine isopeptide (Lys-Gln) (interchain with Q-?)" evidence="1">
    <location>
        <position position="180"/>
    </location>
</feature>
<feature type="cross-link" description="Isoglutamyl lysine isopeptide (Lys-Gln) (interchain with Q-?)" evidence="1">
    <location>
        <position position="182"/>
    </location>
</feature>
<feature type="cross-link" description="Isoglutamyl lysine isopeptide (Lys-Gln) (interchain with Q-?)" evidence="1">
    <location>
        <position position="183"/>
    </location>
</feature>
<feature type="cross-link" description="Isoglutamyl lysine isopeptide (Lys-Gln) (interchain with Q-?)" evidence="1">
    <location>
        <position position="184"/>
    </location>
</feature>